<organism>
    <name type="scientific">Oryza sativa subsp. japonica</name>
    <name type="common">Rice</name>
    <dbReference type="NCBI Taxonomy" id="39947"/>
    <lineage>
        <taxon>Eukaryota</taxon>
        <taxon>Viridiplantae</taxon>
        <taxon>Streptophyta</taxon>
        <taxon>Embryophyta</taxon>
        <taxon>Tracheophyta</taxon>
        <taxon>Spermatophyta</taxon>
        <taxon>Magnoliopsida</taxon>
        <taxon>Liliopsida</taxon>
        <taxon>Poales</taxon>
        <taxon>Poaceae</taxon>
        <taxon>BOP clade</taxon>
        <taxon>Oryzoideae</taxon>
        <taxon>Oryzeae</taxon>
        <taxon>Oryzinae</taxon>
        <taxon>Oryza</taxon>
        <taxon>Oryza sativa</taxon>
    </lineage>
</organism>
<keyword id="KW-0489">Methyltransferase</keyword>
<keyword id="KW-1185">Reference proteome</keyword>
<keyword id="KW-0949">S-adenosyl-L-methionine</keyword>
<keyword id="KW-0808">Transferase</keyword>
<protein>
    <recommendedName>
        <fullName>Probable inactive methyltransferase Os04g0175900</fullName>
        <ecNumber>2.1.1.-</ecNumber>
    </recommendedName>
</protein>
<comment type="miscellaneous">
    <text evidence="4">Identified in a screen to identify naringenin 7-O-methyltransferase. However, it does not show such activity (PubMed:22493492).</text>
</comment>
<comment type="similarity">
    <text evidence="2">Belongs to the class I-like SAM-binding methyltransferase superfamily. Cation-independent O-methyltransferase family. COMT subfamily.</text>
</comment>
<comment type="caution">
    <text evidence="3">Lacks the typical His active site around position 277, suggesting it has no methyltransferase activity.</text>
</comment>
<proteinExistence type="evidence at protein level"/>
<accession>Q7XXD4</accession>
<accession>A0A0P0W730</accession>
<name>METL_ORYSJ</name>
<feature type="chain" id="PRO_0000418735" description="Probable inactive methyltransferase Os04g0175900">
    <location>
        <begin position="1"/>
        <end position="371"/>
    </location>
</feature>
<feature type="region of interest" description="Substrate binding" evidence="1">
    <location>
        <begin position="170"/>
        <end position="188"/>
    </location>
</feature>
<feature type="binding site" evidence="1">
    <location>
        <begin position="137"/>
        <end position="143"/>
    </location>
    <ligand>
        <name>substrate</name>
    </ligand>
</feature>
<feature type="binding site" evidence="2">
    <location>
        <position position="216"/>
    </location>
    <ligand>
        <name>S-adenosyl-L-methionine</name>
        <dbReference type="ChEBI" id="CHEBI:59789"/>
    </ligand>
</feature>
<feature type="binding site" evidence="2">
    <location>
        <position position="239"/>
    </location>
    <ligand>
        <name>S-adenosyl-L-methionine</name>
        <dbReference type="ChEBI" id="CHEBI:59789"/>
    </ligand>
</feature>
<feature type="binding site" evidence="2">
    <location>
        <position position="260"/>
    </location>
    <ligand>
        <name>S-adenosyl-L-methionine</name>
        <dbReference type="ChEBI" id="CHEBI:59789"/>
    </ligand>
</feature>
<feature type="binding site" evidence="2">
    <location>
        <position position="273"/>
    </location>
    <ligand>
        <name>S-adenosyl-L-methionine</name>
        <dbReference type="ChEBI" id="CHEBI:59789"/>
    </ligand>
</feature>
<reference key="1">
    <citation type="journal article" date="2002" name="Nature">
        <title>Sequence and analysis of rice chromosome 4.</title>
        <authorList>
            <person name="Feng Q."/>
            <person name="Zhang Y."/>
            <person name="Hao P."/>
            <person name="Wang S."/>
            <person name="Fu G."/>
            <person name="Huang Y."/>
            <person name="Li Y."/>
            <person name="Zhu J."/>
            <person name="Liu Y."/>
            <person name="Hu X."/>
            <person name="Jia P."/>
            <person name="Zhang Y."/>
            <person name="Zhao Q."/>
            <person name="Ying K."/>
            <person name="Yu S."/>
            <person name="Tang Y."/>
            <person name="Weng Q."/>
            <person name="Zhang L."/>
            <person name="Lu Y."/>
            <person name="Mu J."/>
            <person name="Lu Y."/>
            <person name="Zhang L.S."/>
            <person name="Yu Z."/>
            <person name="Fan D."/>
            <person name="Liu X."/>
            <person name="Lu T."/>
            <person name="Li C."/>
            <person name="Wu Y."/>
            <person name="Sun T."/>
            <person name="Lei H."/>
            <person name="Li T."/>
            <person name="Hu H."/>
            <person name="Guan J."/>
            <person name="Wu M."/>
            <person name="Zhang R."/>
            <person name="Zhou B."/>
            <person name="Chen Z."/>
            <person name="Chen L."/>
            <person name="Jin Z."/>
            <person name="Wang R."/>
            <person name="Yin H."/>
            <person name="Cai Z."/>
            <person name="Ren S."/>
            <person name="Lv G."/>
            <person name="Gu W."/>
            <person name="Zhu G."/>
            <person name="Tu Y."/>
            <person name="Jia J."/>
            <person name="Zhang Y."/>
            <person name="Chen J."/>
            <person name="Kang H."/>
            <person name="Chen X."/>
            <person name="Shao C."/>
            <person name="Sun Y."/>
            <person name="Hu Q."/>
            <person name="Zhang X."/>
            <person name="Zhang W."/>
            <person name="Wang L."/>
            <person name="Ding C."/>
            <person name="Sheng H."/>
            <person name="Gu J."/>
            <person name="Chen S."/>
            <person name="Ni L."/>
            <person name="Zhu F."/>
            <person name="Chen W."/>
            <person name="Lan L."/>
            <person name="Lai Y."/>
            <person name="Cheng Z."/>
            <person name="Gu M."/>
            <person name="Jiang J."/>
            <person name="Li J."/>
            <person name="Hong G."/>
            <person name="Xue Y."/>
            <person name="Han B."/>
        </authorList>
    </citation>
    <scope>NUCLEOTIDE SEQUENCE [LARGE SCALE GENOMIC DNA]</scope>
    <source>
        <strain>cv. Nipponbare</strain>
    </source>
</reference>
<reference key="2">
    <citation type="journal article" date="2005" name="Nature">
        <title>The map-based sequence of the rice genome.</title>
        <authorList>
            <consortium name="International rice genome sequencing project (IRGSP)"/>
        </authorList>
    </citation>
    <scope>NUCLEOTIDE SEQUENCE [LARGE SCALE GENOMIC DNA]</scope>
    <source>
        <strain>cv. Nipponbare</strain>
    </source>
</reference>
<reference key="3">
    <citation type="journal article" date="2008" name="Nucleic Acids Res.">
        <title>The rice annotation project database (RAP-DB): 2008 update.</title>
        <authorList>
            <consortium name="The rice annotation project (RAP)"/>
        </authorList>
    </citation>
    <scope>GENOME REANNOTATION</scope>
    <source>
        <strain>cv. Nipponbare</strain>
    </source>
</reference>
<reference key="4">
    <citation type="journal article" date="2013" name="Rice">
        <title>Improvement of the Oryza sativa Nipponbare reference genome using next generation sequence and optical map data.</title>
        <authorList>
            <person name="Kawahara Y."/>
            <person name="de la Bastide M."/>
            <person name="Hamilton J.P."/>
            <person name="Kanamori H."/>
            <person name="McCombie W.R."/>
            <person name="Ouyang S."/>
            <person name="Schwartz D.C."/>
            <person name="Tanaka T."/>
            <person name="Wu J."/>
            <person name="Zhou S."/>
            <person name="Childs K.L."/>
            <person name="Davidson R.M."/>
            <person name="Lin H."/>
            <person name="Quesada-Ocampo L."/>
            <person name="Vaillancourt B."/>
            <person name="Sakai H."/>
            <person name="Lee S.S."/>
            <person name="Kim J."/>
            <person name="Numa H."/>
            <person name="Itoh T."/>
            <person name="Buell C.R."/>
            <person name="Matsumoto T."/>
        </authorList>
    </citation>
    <scope>GENOME REANNOTATION</scope>
    <source>
        <strain>cv. Nipponbare</strain>
    </source>
</reference>
<reference key="5">
    <citation type="journal article" date="2003" name="Science">
        <title>Collection, mapping, and annotation of over 28,000 cDNA clones from japonica rice.</title>
        <authorList>
            <consortium name="The rice full-length cDNA consortium"/>
        </authorList>
    </citation>
    <scope>NUCLEOTIDE SEQUENCE [LARGE SCALE MRNA]</scope>
    <source>
        <strain>cv. Nipponbare</strain>
    </source>
</reference>
<reference key="6">
    <citation type="journal article" date="2012" name="J. Biol. Chem.">
        <title>Purification and identification of naringenin 7-o-methyltransferase, a key enzyme in biosynthesis of flavonoid phytoalexin sakuranetin in rice.</title>
        <authorList>
            <person name="Shimizu T."/>
            <person name="Lin F."/>
            <person name="Hasegawa M."/>
            <person name="Okada K."/>
            <person name="Nojiri H."/>
            <person name="Yamane H."/>
        </authorList>
    </citation>
    <scope>IDENTIFICATION BY MASS SPECTROMETRY</scope>
</reference>
<gene>
    <name type="ordered locus">Os04g0175900</name>
    <name type="ordered locus">LOC_Os04g09654</name>
    <name type="ORF">OSJNBa0039G19.11</name>
</gene>
<evidence type="ECO:0000250" key="1"/>
<evidence type="ECO:0000255" key="2">
    <source>
        <dbReference type="PROSITE-ProRule" id="PRU01020"/>
    </source>
</evidence>
<evidence type="ECO:0000305" key="3"/>
<evidence type="ECO:0000305" key="4">
    <source>
    </source>
</evidence>
<sequence length="371" mass="40048">MASGISRTPATGVTAGGGDDEEAAWLHALELISGFTVSMTLKAAIQLGLIDALTAAADGRALTAGELVAQLPAVDDAEAATSVDRMLRLLASFNVVRCSTEAGPGGDPLRRYSPAPVCRWFTAGDNHQGSLAPRLMLDVDEDNLSTWHQMAAAVVSGGPSAFERAHGMPLFEYMGTNHRFNMLFNQAMSQQSMMVMNKLLDRFHGFDGISVLVDVGGGTGVTLKMIISRYKHITGVNFDLPHVISQAPSLPGVNHVAGNMFESVPKGDAIFLKSMLLRNDEECIKILKNCHYALSDNGKVIVVDIVLPETPKPVPEAQNPLRMDVMMLNNLRGGKIRTEQEYAKLAMDSGFSGSFRTTYIFANFMAIELCK</sequence>
<dbReference type="EC" id="2.1.1.-"/>
<dbReference type="EMBL" id="AL731589">
    <property type="protein sequence ID" value="CAD39486.2"/>
    <property type="molecule type" value="Genomic_DNA"/>
</dbReference>
<dbReference type="EMBL" id="AP008210">
    <property type="protein sequence ID" value="BAF14076.1"/>
    <property type="molecule type" value="Genomic_DNA"/>
</dbReference>
<dbReference type="EMBL" id="AP014960">
    <property type="protein sequence ID" value="BAS87935.1"/>
    <property type="molecule type" value="Genomic_DNA"/>
</dbReference>
<dbReference type="EMBL" id="AK061551">
    <property type="protein sequence ID" value="BAG88000.1"/>
    <property type="molecule type" value="mRNA"/>
</dbReference>
<dbReference type="EMBL" id="AK104764">
    <property type="protein sequence ID" value="BAG96938.1"/>
    <property type="molecule type" value="mRNA"/>
</dbReference>
<dbReference type="SMR" id="Q7XXD4"/>
<dbReference type="FunCoup" id="Q7XXD4">
    <property type="interactions" value="45"/>
</dbReference>
<dbReference type="STRING" id="39947.Q7XXD4"/>
<dbReference type="PaxDb" id="39947-Q7XXD4"/>
<dbReference type="EnsemblPlants" id="Os04t0175900-01">
    <property type="protein sequence ID" value="Os04t0175900-01"/>
    <property type="gene ID" value="Os04g0175900"/>
</dbReference>
<dbReference type="Gramene" id="Os04t0175900-01">
    <property type="protein sequence ID" value="Os04t0175900-01"/>
    <property type="gene ID" value="Os04g0175900"/>
</dbReference>
<dbReference type="KEGG" id="dosa:Os04g0175900"/>
<dbReference type="eggNOG" id="KOG3178">
    <property type="taxonomic scope" value="Eukaryota"/>
</dbReference>
<dbReference type="HOGENOM" id="CLU_005533_12_1_1"/>
<dbReference type="InParanoid" id="Q7XXD4"/>
<dbReference type="OMA" id="FLIWIME"/>
<dbReference type="Proteomes" id="UP000000763">
    <property type="component" value="Chromosome 4"/>
</dbReference>
<dbReference type="Proteomes" id="UP000059680">
    <property type="component" value="Chromosome 4"/>
</dbReference>
<dbReference type="GO" id="GO:0008171">
    <property type="term" value="F:O-methyltransferase activity"/>
    <property type="evidence" value="ECO:0000318"/>
    <property type="project" value="GO_Central"/>
</dbReference>
<dbReference type="GO" id="GO:0046983">
    <property type="term" value="F:protein dimerization activity"/>
    <property type="evidence" value="ECO:0007669"/>
    <property type="project" value="InterPro"/>
</dbReference>
<dbReference type="GO" id="GO:0008757">
    <property type="term" value="F:S-adenosylmethionine-dependent methyltransferase activity"/>
    <property type="evidence" value="ECO:0000318"/>
    <property type="project" value="GO_Central"/>
</dbReference>
<dbReference type="GO" id="GO:0009058">
    <property type="term" value="P:biosynthetic process"/>
    <property type="evidence" value="ECO:0000318"/>
    <property type="project" value="GO_Central"/>
</dbReference>
<dbReference type="GO" id="GO:0032259">
    <property type="term" value="P:methylation"/>
    <property type="evidence" value="ECO:0000318"/>
    <property type="project" value="GO_Central"/>
</dbReference>
<dbReference type="CDD" id="cd02440">
    <property type="entry name" value="AdoMet_MTases"/>
    <property type="match status" value="1"/>
</dbReference>
<dbReference type="FunFam" id="1.10.10.10:FF:000473">
    <property type="entry name" value="Caffeic acid O-methyltransferase"/>
    <property type="match status" value="1"/>
</dbReference>
<dbReference type="FunFam" id="3.40.50.150:FF:000061">
    <property type="entry name" value="Caffeic acid O-methyltransferase"/>
    <property type="match status" value="1"/>
</dbReference>
<dbReference type="Gene3D" id="3.40.50.150">
    <property type="entry name" value="Vaccinia Virus protein VP39"/>
    <property type="match status" value="1"/>
</dbReference>
<dbReference type="Gene3D" id="1.10.10.10">
    <property type="entry name" value="Winged helix-like DNA-binding domain superfamily/Winged helix DNA-binding domain"/>
    <property type="match status" value="1"/>
</dbReference>
<dbReference type="InterPro" id="IPR016461">
    <property type="entry name" value="COMT-like"/>
</dbReference>
<dbReference type="InterPro" id="IPR001077">
    <property type="entry name" value="O_MeTrfase_dom"/>
</dbReference>
<dbReference type="InterPro" id="IPR012967">
    <property type="entry name" value="Plant_O-MeTrfase_dimerisation"/>
</dbReference>
<dbReference type="InterPro" id="IPR029063">
    <property type="entry name" value="SAM-dependent_MTases_sf"/>
</dbReference>
<dbReference type="InterPro" id="IPR036388">
    <property type="entry name" value="WH-like_DNA-bd_sf"/>
</dbReference>
<dbReference type="InterPro" id="IPR036390">
    <property type="entry name" value="WH_DNA-bd_sf"/>
</dbReference>
<dbReference type="PANTHER" id="PTHR11746">
    <property type="entry name" value="O-METHYLTRANSFERASE"/>
    <property type="match status" value="1"/>
</dbReference>
<dbReference type="Pfam" id="PF08100">
    <property type="entry name" value="Dimerisation"/>
    <property type="match status" value="1"/>
</dbReference>
<dbReference type="Pfam" id="PF00891">
    <property type="entry name" value="Methyltransf_2"/>
    <property type="match status" value="1"/>
</dbReference>
<dbReference type="PIRSF" id="PIRSF005739">
    <property type="entry name" value="O-mtase"/>
    <property type="match status" value="1"/>
</dbReference>
<dbReference type="SUPFAM" id="SSF53335">
    <property type="entry name" value="S-adenosyl-L-methionine-dependent methyltransferases"/>
    <property type="match status" value="1"/>
</dbReference>
<dbReference type="SUPFAM" id="SSF46785">
    <property type="entry name" value="Winged helix' DNA-binding domain"/>
    <property type="match status" value="1"/>
</dbReference>
<dbReference type="PROSITE" id="PS51683">
    <property type="entry name" value="SAM_OMT_II"/>
    <property type="match status" value="1"/>
</dbReference>